<accession>Q11DG3</accession>
<sequence>MKADIHPDYHMIKVVMTDGTEYETRSTWGKEGDTLNLDIDPNSHPAWTGGQQTLVDRGGRLSKFKKRYEGLGI</sequence>
<evidence type="ECO:0000255" key="1">
    <source>
        <dbReference type="HAMAP-Rule" id="MF_00501"/>
    </source>
</evidence>
<evidence type="ECO:0000305" key="2"/>
<organism>
    <name type="scientific">Chelativorans sp. (strain BNC1)</name>
    <dbReference type="NCBI Taxonomy" id="266779"/>
    <lineage>
        <taxon>Bacteria</taxon>
        <taxon>Pseudomonadati</taxon>
        <taxon>Pseudomonadota</taxon>
        <taxon>Alphaproteobacteria</taxon>
        <taxon>Hyphomicrobiales</taxon>
        <taxon>Phyllobacteriaceae</taxon>
        <taxon>Chelativorans</taxon>
    </lineage>
</organism>
<dbReference type="EMBL" id="CP000390">
    <property type="protein sequence ID" value="ABG64562.1"/>
    <property type="molecule type" value="Genomic_DNA"/>
</dbReference>
<dbReference type="SMR" id="Q11DG3"/>
<dbReference type="STRING" id="266779.Meso_3190"/>
<dbReference type="KEGG" id="mes:Meso_3190"/>
<dbReference type="eggNOG" id="COG0254">
    <property type="taxonomic scope" value="Bacteria"/>
</dbReference>
<dbReference type="HOGENOM" id="CLU_114306_3_2_5"/>
<dbReference type="OrthoDB" id="9803251at2"/>
<dbReference type="GO" id="GO:1990904">
    <property type="term" value="C:ribonucleoprotein complex"/>
    <property type="evidence" value="ECO:0007669"/>
    <property type="project" value="UniProtKB-KW"/>
</dbReference>
<dbReference type="GO" id="GO:0005840">
    <property type="term" value="C:ribosome"/>
    <property type="evidence" value="ECO:0007669"/>
    <property type="project" value="UniProtKB-KW"/>
</dbReference>
<dbReference type="GO" id="GO:0019843">
    <property type="term" value="F:rRNA binding"/>
    <property type="evidence" value="ECO:0007669"/>
    <property type="project" value="UniProtKB-KW"/>
</dbReference>
<dbReference type="GO" id="GO:0003735">
    <property type="term" value="F:structural constituent of ribosome"/>
    <property type="evidence" value="ECO:0007669"/>
    <property type="project" value="InterPro"/>
</dbReference>
<dbReference type="GO" id="GO:0006412">
    <property type="term" value="P:translation"/>
    <property type="evidence" value="ECO:0007669"/>
    <property type="project" value="UniProtKB-UniRule"/>
</dbReference>
<dbReference type="Gene3D" id="4.10.830.30">
    <property type="entry name" value="Ribosomal protein L31"/>
    <property type="match status" value="1"/>
</dbReference>
<dbReference type="HAMAP" id="MF_00501">
    <property type="entry name" value="Ribosomal_bL31_1"/>
    <property type="match status" value="1"/>
</dbReference>
<dbReference type="InterPro" id="IPR034704">
    <property type="entry name" value="Ribosomal_bL28/bL31-like_sf"/>
</dbReference>
<dbReference type="InterPro" id="IPR002150">
    <property type="entry name" value="Ribosomal_bL31"/>
</dbReference>
<dbReference type="InterPro" id="IPR027491">
    <property type="entry name" value="Ribosomal_bL31_A"/>
</dbReference>
<dbReference type="InterPro" id="IPR042105">
    <property type="entry name" value="Ribosomal_bL31_sf"/>
</dbReference>
<dbReference type="NCBIfam" id="TIGR00105">
    <property type="entry name" value="L31"/>
    <property type="match status" value="1"/>
</dbReference>
<dbReference type="NCBIfam" id="NF001809">
    <property type="entry name" value="PRK00528.1"/>
    <property type="match status" value="1"/>
</dbReference>
<dbReference type="PANTHER" id="PTHR33280">
    <property type="entry name" value="50S RIBOSOMAL PROTEIN L31, CHLOROPLASTIC"/>
    <property type="match status" value="1"/>
</dbReference>
<dbReference type="PANTHER" id="PTHR33280:SF6">
    <property type="entry name" value="LARGE RIBOSOMAL SUBUNIT PROTEIN BL31A"/>
    <property type="match status" value="1"/>
</dbReference>
<dbReference type="Pfam" id="PF01197">
    <property type="entry name" value="Ribosomal_L31"/>
    <property type="match status" value="1"/>
</dbReference>
<dbReference type="PRINTS" id="PR01249">
    <property type="entry name" value="RIBOSOMALL31"/>
</dbReference>
<dbReference type="SUPFAM" id="SSF143800">
    <property type="entry name" value="L28p-like"/>
    <property type="match status" value="1"/>
</dbReference>
<dbReference type="PROSITE" id="PS01143">
    <property type="entry name" value="RIBOSOMAL_L31"/>
    <property type="match status" value="1"/>
</dbReference>
<protein>
    <recommendedName>
        <fullName evidence="1">Large ribosomal subunit protein bL31</fullName>
    </recommendedName>
    <alternativeName>
        <fullName evidence="2">50S ribosomal protein L31</fullName>
    </alternativeName>
</protein>
<keyword id="KW-0687">Ribonucleoprotein</keyword>
<keyword id="KW-0689">Ribosomal protein</keyword>
<keyword id="KW-0694">RNA-binding</keyword>
<keyword id="KW-0699">rRNA-binding</keyword>
<reference key="1">
    <citation type="submission" date="2006-06" db="EMBL/GenBank/DDBJ databases">
        <title>Complete sequence of chromosome of Mesorhizobium sp. BNC1.</title>
        <authorList>
            <consortium name="US DOE Joint Genome Institute"/>
            <person name="Copeland A."/>
            <person name="Lucas S."/>
            <person name="Lapidus A."/>
            <person name="Barry K."/>
            <person name="Detter J.C."/>
            <person name="Glavina del Rio T."/>
            <person name="Hammon N."/>
            <person name="Israni S."/>
            <person name="Dalin E."/>
            <person name="Tice H."/>
            <person name="Pitluck S."/>
            <person name="Chertkov O."/>
            <person name="Brettin T."/>
            <person name="Bruce D."/>
            <person name="Han C."/>
            <person name="Tapia R."/>
            <person name="Gilna P."/>
            <person name="Schmutz J."/>
            <person name="Larimer F."/>
            <person name="Land M."/>
            <person name="Hauser L."/>
            <person name="Kyrpides N."/>
            <person name="Mikhailova N."/>
            <person name="Richardson P."/>
        </authorList>
    </citation>
    <scope>NUCLEOTIDE SEQUENCE [LARGE SCALE GENOMIC DNA]</scope>
    <source>
        <strain>BNC1</strain>
    </source>
</reference>
<gene>
    <name evidence="1" type="primary">rpmE</name>
    <name type="ordered locus">Meso_3190</name>
</gene>
<comment type="function">
    <text evidence="1">Binds the 23S rRNA.</text>
</comment>
<comment type="subunit">
    <text evidence="1">Part of the 50S ribosomal subunit.</text>
</comment>
<comment type="similarity">
    <text evidence="1">Belongs to the bacterial ribosomal protein bL31 family. Type A subfamily.</text>
</comment>
<proteinExistence type="inferred from homology"/>
<name>RL31_CHESB</name>
<feature type="chain" id="PRO_0000259195" description="Large ribosomal subunit protein bL31">
    <location>
        <begin position="1"/>
        <end position="73"/>
    </location>
</feature>